<proteinExistence type="inferred from homology"/>
<comment type="catalytic activity">
    <reaction evidence="1">
        <text>(4aS,6R)-4a-hydroxy-L-erythro-5,6,7,8-tetrahydrobiopterin = (6R)-L-erythro-6,7-dihydrobiopterin + H2O</text>
        <dbReference type="Rhea" id="RHEA:11920"/>
        <dbReference type="ChEBI" id="CHEBI:15377"/>
        <dbReference type="ChEBI" id="CHEBI:15642"/>
        <dbReference type="ChEBI" id="CHEBI:43120"/>
        <dbReference type="EC" id="4.2.1.96"/>
    </reaction>
</comment>
<comment type="similarity">
    <text evidence="1">Belongs to the pterin-4-alpha-carbinolamine dehydratase family.</text>
</comment>
<evidence type="ECO:0000255" key="1">
    <source>
        <dbReference type="HAMAP-Rule" id="MF_00434"/>
    </source>
</evidence>
<dbReference type="EC" id="4.2.1.96" evidence="1"/>
<dbReference type="EMBL" id="AE017282">
    <property type="protein sequence ID" value="AAU93190.1"/>
    <property type="molecule type" value="Genomic_DNA"/>
</dbReference>
<dbReference type="SMR" id="Q60BH8"/>
<dbReference type="STRING" id="243233.MCA0497"/>
<dbReference type="KEGG" id="mca:MCA0497"/>
<dbReference type="eggNOG" id="COG2154">
    <property type="taxonomic scope" value="Bacteria"/>
</dbReference>
<dbReference type="HOGENOM" id="CLU_081974_2_2_6"/>
<dbReference type="Proteomes" id="UP000006821">
    <property type="component" value="Chromosome"/>
</dbReference>
<dbReference type="GO" id="GO:0008124">
    <property type="term" value="F:4-alpha-hydroxytetrahydrobiopterin dehydratase activity"/>
    <property type="evidence" value="ECO:0007669"/>
    <property type="project" value="UniProtKB-UniRule"/>
</dbReference>
<dbReference type="GO" id="GO:0006729">
    <property type="term" value="P:tetrahydrobiopterin biosynthetic process"/>
    <property type="evidence" value="ECO:0007669"/>
    <property type="project" value="InterPro"/>
</dbReference>
<dbReference type="CDD" id="cd00913">
    <property type="entry name" value="PCD_DCoH_subfamily_a"/>
    <property type="match status" value="1"/>
</dbReference>
<dbReference type="Gene3D" id="3.30.1360.20">
    <property type="entry name" value="Transcriptional coactivator/pterin dehydratase"/>
    <property type="match status" value="1"/>
</dbReference>
<dbReference type="HAMAP" id="MF_00434">
    <property type="entry name" value="Pterin_4_alpha"/>
    <property type="match status" value="1"/>
</dbReference>
<dbReference type="InterPro" id="IPR036428">
    <property type="entry name" value="PCD_sf"/>
</dbReference>
<dbReference type="InterPro" id="IPR050376">
    <property type="entry name" value="Pterin-4-alpha-carb_dehyd"/>
</dbReference>
<dbReference type="InterPro" id="IPR001533">
    <property type="entry name" value="Pterin_deHydtase"/>
</dbReference>
<dbReference type="PANTHER" id="PTHR42805">
    <property type="entry name" value="PTERIN-4-ALPHA-CARBINOLAMINE DEHYDRATASE-RELATED"/>
    <property type="match status" value="1"/>
</dbReference>
<dbReference type="PANTHER" id="PTHR42805:SF1">
    <property type="entry name" value="PTERIN-4-ALPHA-CARBINOLAMINE DEHYDRATASE-RELATED"/>
    <property type="match status" value="1"/>
</dbReference>
<dbReference type="Pfam" id="PF01329">
    <property type="entry name" value="Pterin_4a"/>
    <property type="match status" value="1"/>
</dbReference>
<dbReference type="SUPFAM" id="SSF55248">
    <property type="entry name" value="PCD-like"/>
    <property type="match status" value="1"/>
</dbReference>
<accession>Q60BH8</accession>
<gene>
    <name type="ordered locus">MCA0497</name>
</gene>
<name>PHS_METCA</name>
<organism>
    <name type="scientific">Methylococcus capsulatus (strain ATCC 33009 / NCIMB 11132 / Bath)</name>
    <dbReference type="NCBI Taxonomy" id="243233"/>
    <lineage>
        <taxon>Bacteria</taxon>
        <taxon>Pseudomonadati</taxon>
        <taxon>Pseudomonadota</taxon>
        <taxon>Gammaproteobacteria</taxon>
        <taxon>Methylococcales</taxon>
        <taxon>Methylococcaceae</taxon>
        <taxon>Methylococcus</taxon>
    </lineage>
</organism>
<reference key="1">
    <citation type="journal article" date="2004" name="PLoS Biol.">
        <title>Genomic insights into methanotrophy: the complete genome sequence of Methylococcus capsulatus (Bath).</title>
        <authorList>
            <person name="Ward N.L."/>
            <person name="Larsen O."/>
            <person name="Sakwa J."/>
            <person name="Bruseth L."/>
            <person name="Khouri H.M."/>
            <person name="Durkin A.S."/>
            <person name="Dimitrov G."/>
            <person name="Jiang L."/>
            <person name="Scanlan D."/>
            <person name="Kang K.H."/>
            <person name="Lewis M.R."/>
            <person name="Nelson K.E."/>
            <person name="Methe B.A."/>
            <person name="Wu M."/>
            <person name="Heidelberg J.F."/>
            <person name="Paulsen I.T."/>
            <person name="Fouts D.E."/>
            <person name="Ravel J."/>
            <person name="Tettelin H."/>
            <person name="Ren Q."/>
            <person name="Read T.D."/>
            <person name="DeBoy R.T."/>
            <person name="Seshadri R."/>
            <person name="Salzberg S.L."/>
            <person name="Jensen H.B."/>
            <person name="Birkeland N.K."/>
            <person name="Nelson W.C."/>
            <person name="Dodson R.J."/>
            <person name="Grindhaug S.H."/>
            <person name="Holt I.E."/>
            <person name="Eidhammer I."/>
            <person name="Jonasen I."/>
            <person name="Vanaken S."/>
            <person name="Utterback T.R."/>
            <person name="Feldblyum T.V."/>
            <person name="Fraser C.M."/>
            <person name="Lillehaug J.R."/>
            <person name="Eisen J.A."/>
        </authorList>
    </citation>
    <scope>NUCLEOTIDE SEQUENCE [LARGE SCALE GENOMIC DNA]</scope>
    <source>
        <strain>ATCC 33009 / NCIMB 11132 / Bath</strain>
    </source>
</reference>
<sequence>MDACSLTAKQCTPCQGGIPPLTAEEAEKLLVHVPRWELKDAATKLKRTFRFENFMEALDFARKVGELCEAEGHHPDIGIGWGYCRVEFQTHKINGLHENDFIMAAKVDELAAEA</sequence>
<feature type="chain" id="PRO_0000231453" description="Putative pterin-4-alpha-carbinolamine dehydratase">
    <location>
        <begin position="1"/>
        <end position="114"/>
    </location>
</feature>
<protein>
    <recommendedName>
        <fullName evidence="1">Putative pterin-4-alpha-carbinolamine dehydratase</fullName>
        <shortName evidence="1">PHS</shortName>
        <ecNumber evidence="1">4.2.1.96</ecNumber>
    </recommendedName>
    <alternativeName>
        <fullName evidence="1">4-alpha-hydroxy-tetrahydropterin dehydratase</fullName>
    </alternativeName>
    <alternativeName>
        <fullName evidence="1">Pterin carbinolamine dehydratase</fullName>
        <shortName evidence="1">PCD</shortName>
    </alternativeName>
</protein>
<keyword id="KW-0456">Lyase</keyword>
<keyword id="KW-1185">Reference proteome</keyword>